<reference key="1">
    <citation type="journal article" date="2004" name="Genome Res.">
        <title>A phylogeny of Caenorhabditis reveals frequent loss of introns during nematode evolution.</title>
        <authorList>
            <person name="Cho S."/>
            <person name="Jin S.W."/>
            <person name="Cohen A."/>
            <person name="Ellis R.E."/>
        </authorList>
    </citation>
    <scope>NUCLEOTIDE SEQUENCE [GENOMIC DNA / MRNA]</scope>
</reference>
<dbReference type="EMBL" id="AY589643">
    <property type="protein sequence ID" value="AAT72427.1"/>
    <property type="molecule type" value="Genomic_DNA"/>
</dbReference>
<dbReference type="EMBL" id="AY589593">
    <property type="protein sequence ID" value="AAT72410.1"/>
    <property type="molecule type" value="mRNA"/>
</dbReference>
<dbReference type="SMR" id="Q6E3C9"/>
<dbReference type="eggNOG" id="KOG0129">
    <property type="taxonomic scope" value="Eukaryota"/>
</dbReference>
<dbReference type="HOGENOM" id="CLU_035644_0_0_1"/>
<dbReference type="GO" id="GO:0005737">
    <property type="term" value="C:cytoplasm"/>
    <property type="evidence" value="ECO:0007669"/>
    <property type="project" value="TreeGrafter"/>
</dbReference>
<dbReference type="GO" id="GO:0043005">
    <property type="term" value="C:neuron projection"/>
    <property type="evidence" value="ECO:0007669"/>
    <property type="project" value="TreeGrafter"/>
</dbReference>
<dbReference type="GO" id="GO:0005634">
    <property type="term" value="C:nucleus"/>
    <property type="evidence" value="ECO:0007669"/>
    <property type="project" value="TreeGrafter"/>
</dbReference>
<dbReference type="GO" id="GO:0045202">
    <property type="term" value="C:synapse"/>
    <property type="evidence" value="ECO:0007669"/>
    <property type="project" value="TreeGrafter"/>
</dbReference>
<dbReference type="GO" id="GO:0003730">
    <property type="term" value="F:mRNA 3'-UTR binding"/>
    <property type="evidence" value="ECO:0007669"/>
    <property type="project" value="InterPro"/>
</dbReference>
<dbReference type="GO" id="GO:0000900">
    <property type="term" value="F:mRNA regulatory element binding translation repressor activity"/>
    <property type="evidence" value="ECO:0007669"/>
    <property type="project" value="TreeGrafter"/>
</dbReference>
<dbReference type="GO" id="GO:0043022">
    <property type="term" value="F:ribosome binding"/>
    <property type="evidence" value="ECO:0007669"/>
    <property type="project" value="TreeGrafter"/>
</dbReference>
<dbReference type="GO" id="GO:0008135">
    <property type="term" value="F:translation factor activity, RNA binding"/>
    <property type="evidence" value="ECO:0007669"/>
    <property type="project" value="TreeGrafter"/>
</dbReference>
<dbReference type="GO" id="GO:0030154">
    <property type="term" value="P:cell differentiation"/>
    <property type="evidence" value="ECO:0007669"/>
    <property type="project" value="UniProtKB-KW"/>
</dbReference>
<dbReference type="GO" id="GO:2000766">
    <property type="term" value="P:negative regulation of cytoplasmic translation"/>
    <property type="evidence" value="ECO:0007669"/>
    <property type="project" value="TreeGrafter"/>
</dbReference>
<dbReference type="GO" id="GO:0007283">
    <property type="term" value="P:spermatogenesis"/>
    <property type="evidence" value="ECO:0007669"/>
    <property type="project" value="UniProtKB-KW"/>
</dbReference>
<dbReference type="CDD" id="cd19757">
    <property type="entry name" value="Bbox1"/>
    <property type="match status" value="1"/>
</dbReference>
<dbReference type="CDD" id="cd12724">
    <property type="entry name" value="RRM1_CPEB2_like"/>
    <property type="match status" value="1"/>
</dbReference>
<dbReference type="CDD" id="cd12726">
    <property type="entry name" value="RRM2_CPEB2_like"/>
    <property type="match status" value="1"/>
</dbReference>
<dbReference type="FunFam" id="4.10.640.40:FF:000001">
    <property type="entry name" value="Cytoplasmic polyadenylation element-binding 2 isoform X2"/>
    <property type="match status" value="1"/>
</dbReference>
<dbReference type="Gene3D" id="3.30.70.330">
    <property type="match status" value="2"/>
</dbReference>
<dbReference type="Gene3D" id="4.10.640.40">
    <property type="entry name" value="Cytoplasmic polyadenylation element-binding protein, ZZ domain"/>
    <property type="match status" value="1"/>
</dbReference>
<dbReference type="InterPro" id="IPR032296">
    <property type="entry name" value="CEBP_ZZ"/>
</dbReference>
<dbReference type="InterPro" id="IPR038446">
    <property type="entry name" value="CEBP_ZZ_sf"/>
</dbReference>
<dbReference type="InterPro" id="IPR034819">
    <property type="entry name" value="CPEB"/>
</dbReference>
<dbReference type="InterPro" id="IPR012677">
    <property type="entry name" value="Nucleotide-bd_a/b_plait_sf"/>
</dbReference>
<dbReference type="InterPro" id="IPR035979">
    <property type="entry name" value="RBD_domain_sf"/>
</dbReference>
<dbReference type="InterPro" id="IPR000504">
    <property type="entry name" value="RRM_dom"/>
</dbReference>
<dbReference type="PANTHER" id="PTHR12566">
    <property type="entry name" value="CYTOPLASMIC POLYADENYLATION ELEMENT BINDING PROTEIN CPEB"/>
    <property type="match status" value="1"/>
</dbReference>
<dbReference type="PANTHER" id="PTHR12566:SF17">
    <property type="entry name" value="CYTOPLASMIC POLYADENYLATION ELEMENT-BINDING PROTEIN 1"/>
    <property type="match status" value="1"/>
</dbReference>
<dbReference type="Pfam" id="PF16366">
    <property type="entry name" value="CEBP_ZZ"/>
    <property type="match status" value="1"/>
</dbReference>
<dbReference type="Pfam" id="PF16367">
    <property type="entry name" value="RRM_7"/>
    <property type="match status" value="1"/>
</dbReference>
<dbReference type="SMART" id="SM00360">
    <property type="entry name" value="RRM"/>
    <property type="match status" value="2"/>
</dbReference>
<dbReference type="SUPFAM" id="SSF54928">
    <property type="entry name" value="RNA-binding domain, RBD"/>
    <property type="match status" value="1"/>
</dbReference>
<dbReference type="PROSITE" id="PS50102">
    <property type="entry name" value="RRM"/>
    <property type="match status" value="2"/>
</dbReference>
<comment type="function">
    <text evidence="1">Cytoplasmic polyadenylation element binding protein that binds to and regulates the translation of specific mRNAs. Essential for progression through meiosis. Involved in spermatogenesis (By similarity).</text>
</comment>
<comment type="subunit">
    <text evidence="1">Interacts with fbf-1.</text>
</comment>
<accession>Q6E3C9</accession>
<evidence type="ECO:0000250" key="1"/>
<evidence type="ECO:0000255" key="2">
    <source>
        <dbReference type="PROSITE-ProRule" id="PRU00176"/>
    </source>
</evidence>
<evidence type="ECO:0000256" key="3">
    <source>
        <dbReference type="SAM" id="MobiDB-lite"/>
    </source>
</evidence>
<proteinExistence type="evidence at transcript level"/>
<keyword id="KW-0217">Developmental protein</keyword>
<keyword id="KW-0221">Differentiation</keyword>
<keyword id="KW-0677">Repeat</keyword>
<keyword id="KW-0694">RNA-binding</keyword>
<keyword id="KW-0744">Spermatogenesis</keyword>
<name>CPB1_CAERE</name>
<gene>
    <name type="primary">cpb-1</name>
</gene>
<feature type="chain" id="PRO_0000081511" description="Cytoplasmic polyadenylation element-binding protein 1">
    <location>
        <begin position="1"/>
        <end position="594"/>
    </location>
</feature>
<feature type="domain" description="RRM 1" evidence="2">
    <location>
        <begin position="257"/>
        <end position="364"/>
    </location>
</feature>
<feature type="domain" description="RRM 2" evidence="2">
    <location>
        <begin position="381"/>
        <end position="452"/>
    </location>
</feature>
<feature type="region of interest" description="Disordered" evidence="3">
    <location>
        <begin position="1"/>
        <end position="33"/>
    </location>
</feature>
<feature type="region of interest" description="Disordered" evidence="3">
    <location>
        <begin position="519"/>
        <end position="560"/>
    </location>
</feature>
<feature type="compositionally biased region" description="Polar residues" evidence="3">
    <location>
        <begin position="11"/>
        <end position="22"/>
    </location>
</feature>
<feature type="compositionally biased region" description="Polar residues" evidence="3">
    <location>
        <begin position="535"/>
        <end position="560"/>
    </location>
</feature>
<protein>
    <recommendedName>
        <fullName>Cytoplasmic polyadenylation element-binding protein 1</fullName>
    </recommendedName>
</protein>
<organism>
    <name type="scientific">Caenorhabditis remanei</name>
    <name type="common">Caenorhabditis vulgaris</name>
    <dbReference type="NCBI Taxonomy" id="31234"/>
    <lineage>
        <taxon>Eukaryota</taxon>
        <taxon>Metazoa</taxon>
        <taxon>Ecdysozoa</taxon>
        <taxon>Nematoda</taxon>
        <taxon>Chromadorea</taxon>
        <taxon>Rhabditida</taxon>
        <taxon>Rhabditina</taxon>
        <taxon>Rhabditomorpha</taxon>
        <taxon>Rhabditoidea</taxon>
        <taxon>Rhabditidae</taxon>
        <taxon>Peloderinae</taxon>
        <taxon>Caenorhabditis</taxon>
    </lineage>
</organism>
<sequence>MQHQVKACGDSKSTTRSLQGNRRSGAASLKKPSGNGTFLATDVTNLDMNSSFLSKKLKRNGNPVIGMNIQSSNAFLGAQLAANNFNFAQQLNHAALYNNLEFQMAVASGDVPSLMSMPAHKPSLSVSSIDPSMDMSQFTEELNAIQNMSYSPMMPSSAALQSIFAANDSSAISPYMNLQKTSLLPTSTLRVSGARKNRIVEVKTLNDRMVIVSIDPQATASTRPNIIPLNRPLMSVAQNCIDMTKKRPLSAEALYSRKVFIGGLPIDVAEEEVWATFGAFGKVLVDWPRRPEHNNGRGGDNMYEVEMGRRNLRSVSGYVFLVFTNERSVQELVNACEFYENKYYLQLSSPTMSDKAVQVRPWRLSDIDYFCDDSCSVDHRRTVFIGGVPRPTRASDLASSLQDYYGKVSYVGIDIDPELKYPKGAARVTFANSQSFVRAISGRFVQVTHAETNKRVEIKPYVMEDQHCDECQGVLCKHNYAPYFCGDSSCLQYYCEACWDRMHYIVCDSRADHRPMVRTGDQTRILPRPPHHQSSHYSPRSHQMMNHDSMESSNQSRGNTSSIISRIVNRNSAASVMDRQTTKPFAATPAVIGY</sequence>